<reference key="1">
    <citation type="submission" date="2005-10" db="EMBL/GenBank/DDBJ databases">
        <title>Complete sequence of Pelobacter carbinolicus DSM 2380.</title>
        <authorList>
            <person name="Copeland A."/>
            <person name="Lucas S."/>
            <person name="Lapidus A."/>
            <person name="Barry K."/>
            <person name="Detter J.C."/>
            <person name="Glavina T."/>
            <person name="Hammon N."/>
            <person name="Israni S."/>
            <person name="Pitluck S."/>
            <person name="Chertkov O."/>
            <person name="Schmutz J."/>
            <person name="Larimer F."/>
            <person name="Land M."/>
            <person name="Kyrpides N."/>
            <person name="Ivanova N."/>
            <person name="Richardson P."/>
        </authorList>
    </citation>
    <scope>NUCLEOTIDE SEQUENCE [LARGE SCALE GENOMIC DNA]</scope>
    <source>
        <strain>DSM 2380 / NBRC 103641 / GraBd1</strain>
    </source>
</reference>
<name>TRMD_SYNC1</name>
<protein>
    <recommendedName>
        <fullName evidence="1">tRNA (guanine-N(1)-)-methyltransferase</fullName>
        <ecNumber evidence="1">2.1.1.228</ecNumber>
    </recommendedName>
    <alternativeName>
        <fullName evidence="1">M1G-methyltransferase</fullName>
    </alternativeName>
    <alternativeName>
        <fullName evidence="1">tRNA [GM37] methyltransferase</fullName>
    </alternativeName>
</protein>
<organism>
    <name type="scientific">Syntrophotalea carbinolica (strain DSM 2380 / NBRC 103641 / GraBd1)</name>
    <name type="common">Pelobacter carbinolicus</name>
    <dbReference type="NCBI Taxonomy" id="338963"/>
    <lineage>
        <taxon>Bacteria</taxon>
        <taxon>Pseudomonadati</taxon>
        <taxon>Thermodesulfobacteriota</taxon>
        <taxon>Desulfuromonadia</taxon>
        <taxon>Desulfuromonadales</taxon>
        <taxon>Syntrophotaleaceae</taxon>
        <taxon>Syntrophotalea</taxon>
    </lineage>
</organism>
<dbReference type="EC" id="2.1.1.228" evidence="1"/>
<dbReference type="EMBL" id="CP000142">
    <property type="protein sequence ID" value="ABA89460.1"/>
    <property type="molecule type" value="Genomic_DNA"/>
</dbReference>
<dbReference type="RefSeq" id="WP_011341975.1">
    <property type="nucleotide sequence ID" value="NC_007498.2"/>
</dbReference>
<dbReference type="SMR" id="Q3A2E7"/>
<dbReference type="STRING" id="338963.Pcar_2221"/>
<dbReference type="KEGG" id="pca:Pcar_2221"/>
<dbReference type="eggNOG" id="COG0336">
    <property type="taxonomic scope" value="Bacteria"/>
</dbReference>
<dbReference type="HOGENOM" id="CLU_047363_0_1_7"/>
<dbReference type="OrthoDB" id="9807416at2"/>
<dbReference type="Proteomes" id="UP000002534">
    <property type="component" value="Chromosome"/>
</dbReference>
<dbReference type="GO" id="GO:0005829">
    <property type="term" value="C:cytosol"/>
    <property type="evidence" value="ECO:0007669"/>
    <property type="project" value="TreeGrafter"/>
</dbReference>
<dbReference type="GO" id="GO:0052906">
    <property type="term" value="F:tRNA (guanine(37)-N1)-methyltransferase activity"/>
    <property type="evidence" value="ECO:0007669"/>
    <property type="project" value="UniProtKB-UniRule"/>
</dbReference>
<dbReference type="GO" id="GO:0002939">
    <property type="term" value="P:tRNA N1-guanine methylation"/>
    <property type="evidence" value="ECO:0007669"/>
    <property type="project" value="TreeGrafter"/>
</dbReference>
<dbReference type="CDD" id="cd18080">
    <property type="entry name" value="TrmD-like"/>
    <property type="match status" value="1"/>
</dbReference>
<dbReference type="FunFam" id="1.10.1270.20:FF:000001">
    <property type="entry name" value="tRNA (guanine-N(1)-)-methyltransferase"/>
    <property type="match status" value="1"/>
</dbReference>
<dbReference type="FunFam" id="3.40.1280.10:FF:000001">
    <property type="entry name" value="tRNA (guanine-N(1)-)-methyltransferase"/>
    <property type="match status" value="1"/>
</dbReference>
<dbReference type="Gene3D" id="3.40.1280.10">
    <property type="match status" value="1"/>
</dbReference>
<dbReference type="Gene3D" id="1.10.1270.20">
    <property type="entry name" value="tRNA(m1g37)methyltransferase, domain 2"/>
    <property type="match status" value="1"/>
</dbReference>
<dbReference type="HAMAP" id="MF_00605">
    <property type="entry name" value="TrmD"/>
    <property type="match status" value="1"/>
</dbReference>
<dbReference type="InterPro" id="IPR029028">
    <property type="entry name" value="Alpha/beta_knot_MTases"/>
</dbReference>
<dbReference type="InterPro" id="IPR023148">
    <property type="entry name" value="tRNA_m1G_MeTrfase_C_sf"/>
</dbReference>
<dbReference type="InterPro" id="IPR002649">
    <property type="entry name" value="tRNA_m1G_MeTrfase_TrmD"/>
</dbReference>
<dbReference type="InterPro" id="IPR029026">
    <property type="entry name" value="tRNA_m1G_MTases_N"/>
</dbReference>
<dbReference type="InterPro" id="IPR016009">
    <property type="entry name" value="tRNA_MeTrfase_TRMD/TRM10"/>
</dbReference>
<dbReference type="NCBIfam" id="NF000648">
    <property type="entry name" value="PRK00026.1"/>
    <property type="match status" value="1"/>
</dbReference>
<dbReference type="NCBIfam" id="TIGR00088">
    <property type="entry name" value="trmD"/>
    <property type="match status" value="1"/>
</dbReference>
<dbReference type="PANTHER" id="PTHR46417">
    <property type="entry name" value="TRNA (GUANINE-N(1)-)-METHYLTRANSFERASE"/>
    <property type="match status" value="1"/>
</dbReference>
<dbReference type="PANTHER" id="PTHR46417:SF1">
    <property type="entry name" value="TRNA (GUANINE-N(1)-)-METHYLTRANSFERASE"/>
    <property type="match status" value="1"/>
</dbReference>
<dbReference type="Pfam" id="PF01746">
    <property type="entry name" value="tRNA_m1G_MT"/>
    <property type="match status" value="1"/>
</dbReference>
<dbReference type="PIRSF" id="PIRSF000386">
    <property type="entry name" value="tRNA_mtase"/>
    <property type="match status" value="1"/>
</dbReference>
<dbReference type="SUPFAM" id="SSF75217">
    <property type="entry name" value="alpha/beta knot"/>
    <property type="match status" value="1"/>
</dbReference>
<keyword id="KW-0963">Cytoplasm</keyword>
<keyword id="KW-0489">Methyltransferase</keyword>
<keyword id="KW-1185">Reference proteome</keyword>
<keyword id="KW-0949">S-adenosyl-L-methionine</keyword>
<keyword id="KW-0808">Transferase</keyword>
<keyword id="KW-0819">tRNA processing</keyword>
<feature type="chain" id="PRO_0000257444" description="tRNA (guanine-N(1)-)-methyltransferase">
    <location>
        <begin position="1"/>
        <end position="247"/>
    </location>
</feature>
<feature type="binding site" evidence="1">
    <location>
        <position position="112"/>
    </location>
    <ligand>
        <name>S-adenosyl-L-methionine</name>
        <dbReference type="ChEBI" id="CHEBI:59789"/>
    </ligand>
</feature>
<feature type="binding site" evidence="1">
    <location>
        <begin position="131"/>
        <end position="136"/>
    </location>
    <ligand>
        <name>S-adenosyl-L-methionine</name>
        <dbReference type="ChEBI" id="CHEBI:59789"/>
    </ligand>
</feature>
<comment type="function">
    <text evidence="1">Specifically methylates guanosine-37 in various tRNAs.</text>
</comment>
<comment type="catalytic activity">
    <reaction evidence="1">
        <text>guanosine(37) in tRNA + S-adenosyl-L-methionine = N(1)-methylguanosine(37) in tRNA + S-adenosyl-L-homocysteine + H(+)</text>
        <dbReference type="Rhea" id="RHEA:36899"/>
        <dbReference type="Rhea" id="RHEA-COMP:10145"/>
        <dbReference type="Rhea" id="RHEA-COMP:10147"/>
        <dbReference type="ChEBI" id="CHEBI:15378"/>
        <dbReference type="ChEBI" id="CHEBI:57856"/>
        <dbReference type="ChEBI" id="CHEBI:59789"/>
        <dbReference type="ChEBI" id="CHEBI:73542"/>
        <dbReference type="ChEBI" id="CHEBI:74269"/>
        <dbReference type="EC" id="2.1.1.228"/>
    </reaction>
</comment>
<comment type="subunit">
    <text evidence="1">Homodimer.</text>
</comment>
<comment type="subcellular location">
    <subcellularLocation>
        <location evidence="1">Cytoplasm</location>
    </subcellularLocation>
</comment>
<comment type="similarity">
    <text evidence="1">Belongs to the RNA methyltransferase TrmD family.</text>
</comment>
<sequence length="247" mass="27753">MFFDVLTLFPGMFASPFADSIMGKAVKRGLVQITAHHLRDWAEGKHQITDDVPYGGGEGMVLKPEPVARALRDLRQRRPHSRVLLMTPQGKPFCQESARQLAGEESLVFVCGRYEGFDERIRSMVDDEFSLGDFVLTGGELAAMTIIDAVGRLVPGVLGNRDSAASDSYSDGLLEYAQYTRPAEFEGMKVPDVLLSGNHAAIARWRRQQQLLRTWLRRPDLLERACLSDEDRRMLQELQRQADSGEQ</sequence>
<gene>
    <name evidence="1" type="primary">trmD</name>
    <name type="ordered locus">Pcar_2221</name>
</gene>
<proteinExistence type="inferred from homology"/>
<accession>Q3A2E7</accession>
<evidence type="ECO:0000255" key="1">
    <source>
        <dbReference type="HAMAP-Rule" id="MF_00605"/>
    </source>
</evidence>